<comment type="function">
    <text evidence="3">Transporter that facilitates the transmembrane diffusion of D/L-lactic acid. Is involved in the cellular racemization of lactate and lactate metabolism. The transported molecule is indeed lactic acid and not the lactate anion, in agreement with the assumption that, with very few exceptions, MIPs (major intrinsic proteins) only facilitate the transport of uncharged solutes. Also facilitates urea and H(2)O(2) diffusion across membranes, but is not permeable to water, glycerol and dihydroxyacetone.</text>
</comment>
<comment type="subcellular location">
    <subcellularLocation>
        <location evidence="3">Cell membrane</location>
        <topology evidence="1">Multi-pass membrane protein</topology>
    </subcellularLocation>
</comment>
<comment type="induction">
    <text evidence="2">Induced by L-lactate and repressed by D-lactate. Is thus regulated by the L-lactate/D-lactate ratio. Makes part of the lar operon (larABCDE).</text>
</comment>
<comment type="disruption phenotype">
    <text evidence="3 4">Cells lacking this gene show a decreased lactate transport ability (PubMed:23799297). Deletion of this gene does not affect lactate racemase activity (PubMed:24710389).</text>
</comment>
<comment type="similarity">
    <text evidence="8">Belongs to the MIP/aquaporin (TC 1.A.8) family.</text>
</comment>
<keyword id="KW-1003">Cell membrane</keyword>
<keyword id="KW-0472">Membrane</keyword>
<keyword id="KW-1185">Reference proteome</keyword>
<keyword id="KW-0812">Transmembrane</keyword>
<keyword id="KW-1133">Transmembrane helix</keyword>
<keyword id="KW-0813">Transport</keyword>
<evidence type="ECO:0000255" key="1"/>
<evidence type="ECO:0000269" key="2">
    <source>
    </source>
</evidence>
<evidence type="ECO:0000269" key="3">
    <source>
    </source>
</evidence>
<evidence type="ECO:0000269" key="4">
    <source>
    </source>
</evidence>
<evidence type="ECO:0000303" key="5">
    <source>
    </source>
</evidence>
<evidence type="ECO:0000303" key="6">
    <source>
    </source>
</evidence>
<evidence type="ECO:0000303" key="7">
    <source>
    </source>
</evidence>
<evidence type="ECO:0000305" key="8"/>
<evidence type="ECO:0000305" key="9">
    <source>
    </source>
</evidence>
<evidence type="ECO:0000312" key="10">
    <source>
        <dbReference type="EMBL" id="CCC77664.1"/>
    </source>
</evidence>
<gene>
    <name evidence="7" type="primary">larD</name>
    <name evidence="5 6 10" type="synonym">glpF1</name>
    <name evidence="10" type="ordered locus">lp_0108</name>
</gene>
<proteinExistence type="evidence at transcript level"/>
<sequence length="238" mass="25449">MVHQLIAEFMGTALMIIFGVGVHCSSVLKGTKYRGSGHIFAITTWGFGISVALFIFGNVCINPAMVLAQCLLGNIAWSLFIPYSVAEVLGGVVGSVIVWIMYADHFKASTDEISPITIRNLFCTAPAVRNLPRNFFVELFDTFIFISGILAISEIKTPGIVPIGVGLLVWAIGMGLGGPTGFAMNLARDMGPRIAHAILPIANKADSDWQYGIIVPGIAPFVGAAIAAWFMHGFFGIN</sequence>
<protein>
    <recommendedName>
        <fullName evidence="6 7">D/L-lactic acid transporter</fullName>
    </recommendedName>
    <alternativeName>
        <fullName evidence="7">Lactate racemization operon protein LarD</fullName>
    </alternativeName>
    <alternativeName>
        <fullName evidence="6">Lactic acid channel</fullName>
    </alternativeName>
</protein>
<name>LARD_LACPL</name>
<dbReference type="EMBL" id="AL935263">
    <property type="protein sequence ID" value="CCC77664.1"/>
    <property type="molecule type" value="Genomic_DNA"/>
</dbReference>
<dbReference type="RefSeq" id="WP_003643656.1">
    <property type="nucleotide sequence ID" value="NC_004567.2"/>
</dbReference>
<dbReference type="RefSeq" id="YP_004888178.1">
    <property type="nucleotide sequence ID" value="NC_004567.2"/>
</dbReference>
<dbReference type="SMR" id="F9UST3"/>
<dbReference type="STRING" id="220668.lp_0108"/>
<dbReference type="EnsemblBacteria" id="CCC77664">
    <property type="protein sequence ID" value="CCC77664"/>
    <property type="gene ID" value="lp_0108"/>
</dbReference>
<dbReference type="GeneID" id="89667858"/>
<dbReference type="KEGG" id="lpl:lp_0108"/>
<dbReference type="PATRIC" id="fig|220668.9.peg.88"/>
<dbReference type="eggNOG" id="COG0580">
    <property type="taxonomic scope" value="Bacteria"/>
</dbReference>
<dbReference type="HOGENOM" id="CLU_020019_9_2_9"/>
<dbReference type="OrthoDB" id="9807293at2"/>
<dbReference type="PhylomeDB" id="F9UST3"/>
<dbReference type="Proteomes" id="UP000000432">
    <property type="component" value="Chromosome"/>
</dbReference>
<dbReference type="GO" id="GO:0005886">
    <property type="term" value="C:plasma membrane"/>
    <property type="evidence" value="ECO:0007669"/>
    <property type="project" value="UniProtKB-SubCell"/>
</dbReference>
<dbReference type="GO" id="GO:0015254">
    <property type="term" value="F:glycerol channel activity"/>
    <property type="evidence" value="ECO:0007669"/>
    <property type="project" value="TreeGrafter"/>
</dbReference>
<dbReference type="Gene3D" id="1.20.1080.10">
    <property type="entry name" value="Glycerol uptake facilitator protein"/>
    <property type="match status" value="1"/>
</dbReference>
<dbReference type="InterPro" id="IPR023271">
    <property type="entry name" value="Aquaporin-like"/>
</dbReference>
<dbReference type="InterPro" id="IPR000425">
    <property type="entry name" value="MIP"/>
</dbReference>
<dbReference type="InterPro" id="IPR053481">
    <property type="entry name" value="MIP/AQP_LacticAcid_Trans"/>
</dbReference>
<dbReference type="InterPro" id="IPR050363">
    <property type="entry name" value="MIP/Aquaporin"/>
</dbReference>
<dbReference type="NCBIfam" id="NF043012">
    <property type="entry name" value="LacAcidTportLarD"/>
    <property type="match status" value="1"/>
</dbReference>
<dbReference type="PANTHER" id="PTHR43829">
    <property type="entry name" value="AQUAPORIN OR AQUAGLYCEROPORIN RELATED"/>
    <property type="match status" value="1"/>
</dbReference>
<dbReference type="PANTHER" id="PTHR43829:SF9">
    <property type="entry name" value="AQUAPORIN-9"/>
    <property type="match status" value="1"/>
</dbReference>
<dbReference type="Pfam" id="PF00230">
    <property type="entry name" value="MIP"/>
    <property type="match status" value="1"/>
</dbReference>
<dbReference type="PRINTS" id="PR00783">
    <property type="entry name" value="MINTRINSICP"/>
</dbReference>
<dbReference type="SUPFAM" id="SSF81338">
    <property type="entry name" value="Aquaporin-like"/>
    <property type="match status" value="1"/>
</dbReference>
<accession>F9UST3</accession>
<reference key="1">
    <citation type="journal article" date="2003" name="Proc. Natl. Acad. Sci. U.S.A.">
        <title>Complete genome sequence of Lactobacillus plantarum WCFS1.</title>
        <authorList>
            <person name="Kleerebezem M."/>
            <person name="Boekhorst J."/>
            <person name="van Kranenburg R."/>
            <person name="Molenaar D."/>
            <person name="Kuipers O.P."/>
            <person name="Leer R."/>
            <person name="Tarchini R."/>
            <person name="Peters S.A."/>
            <person name="Sandbrink H.M."/>
            <person name="Fiers M.W.E.J."/>
            <person name="Stiekema W."/>
            <person name="Klein Lankhorst R.M."/>
            <person name="Bron P.A."/>
            <person name="Hoffer S.M."/>
            <person name="Nierop Groot M.N."/>
            <person name="Kerkhoven R."/>
            <person name="De Vries M."/>
            <person name="Ursing B."/>
            <person name="De Vos W.M."/>
            <person name="Siezen R.J."/>
        </authorList>
    </citation>
    <scope>NUCLEOTIDE SEQUENCE [LARGE SCALE GENOMIC DNA]</scope>
    <source>
        <strain>ATCC BAA-793 / NCIMB 8826 / WCFS1</strain>
    </source>
</reference>
<reference key="2">
    <citation type="journal article" date="2012" name="J. Bacteriol.">
        <title>Complete resequencing and reannotation of the Lactobacillus plantarum WCFS1 genome.</title>
        <authorList>
            <person name="Siezen R.J."/>
            <person name="Francke C."/>
            <person name="Renckens B."/>
            <person name="Boekhorst J."/>
            <person name="Wels M."/>
            <person name="Kleerebezem M."/>
            <person name="van Hijum S.A."/>
        </authorList>
    </citation>
    <scope>NUCLEOTIDE SEQUENCE [LARGE SCALE GENOMIC DNA]</scope>
    <scope>GENOME REANNOTATION</scope>
    <source>
        <strain>ATCC BAA-793 / NCIMB 8826 / WCFS1</strain>
    </source>
</reference>
<reference key="3">
    <citation type="journal article" date="2005" name="J. Bacteriol.">
        <title>Lactate racemization as a rescue pathway for supplying D-lactate to the cell wall biosynthesis machinery in Lactobacillus plantarum.</title>
        <authorList>
            <person name="Goffin P."/>
            <person name="Deghorain M."/>
            <person name="Mainardi J.L."/>
            <person name="Tytgat I."/>
            <person name="Champomier-Verges M.C."/>
            <person name="Kleerebezem M."/>
            <person name="Hols P."/>
        </authorList>
    </citation>
    <scope>INDUCTION</scope>
    <source>
        <strain>ATCC BAA-793 / NCIMB 8826 / WCFS1</strain>
    </source>
</reference>
<reference key="4">
    <citation type="journal article" date="2013" name="Biochem. J.">
        <title>Channel-mediated lactic acid transport: a novel function for aquaglyceroporins in bacteria.</title>
        <authorList>
            <person name="Bienert G.P."/>
            <person name="Desguin B."/>
            <person name="Chaumont F."/>
            <person name="Hols P."/>
        </authorList>
    </citation>
    <scope>FUNCTION</scope>
    <scope>SUBCELLULAR LOCATION</scope>
    <scope>DISRUPTION PHENOTYPE</scope>
    <source>
        <strain>ATCC BAA-793 / NCIMB 8826 / WCFS1</strain>
    </source>
</reference>
<reference key="5">
    <citation type="journal article" date="2014" name="Nat. Commun.">
        <title>Lactate racemase is a nickel-dependent enzyme activated by a widespread maturation system.</title>
        <authorList>
            <person name="Desguin B."/>
            <person name="Goffin P."/>
            <person name="Viaene E."/>
            <person name="Kleerebezem M."/>
            <person name="Martin-Diaconescu V."/>
            <person name="Maroney M.J."/>
            <person name="Declercq J.P."/>
            <person name="Soumillion P."/>
            <person name="Hols P."/>
        </authorList>
    </citation>
    <scope>DISRUPTION PHENOTYPE</scope>
    <source>
        <strain>ATCC BAA-793 / NCIMB 8826 / WCFS1</strain>
    </source>
</reference>
<feature type="chain" id="PRO_0000441642" description="D/L-lactic acid transporter">
    <location>
        <begin position="1"/>
        <end position="238"/>
    </location>
</feature>
<feature type="transmembrane region" description="Helical" evidence="1">
    <location>
        <begin position="2"/>
        <end position="22"/>
    </location>
</feature>
<feature type="transmembrane region" description="Helical" evidence="1">
    <location>
        <begin position="39"/>
        <end position="59"/>
    </location>
</feature>
<feature type="transmembrane region" description="Helical" evidence="1">
    <location>
        <begin position="80"/>
        <end position="100"/>
    </location>
</feature>
<feature type="transmembrane region" description="Helical" evidence="1">
    <location>
        <begin position="135"/>
        <end position="155"/>
    </location>
</feature>
<feature type="transmembrane region" description="Helical" evidence="1">
    <location>
        <begin position="158"/>
        <end position="178"/>
    </location>
</feature>
<feature type="transmembrane region" description="Helical" evidence="1">
    <location>
        <begin position="211"/>
        <end position="231"/>
    </location>
</feature>
<feature type="short sequence motif" description="NPA 1" evidence="9">
    <location>
        <begin position="62"/>
        <end position="64"/>
    </location>
</feature>
<feature type="short sequence motif" description="NPA 2" evidence="9">
    <location>
        <begin position="185"/>
        <end position="187"/>
    </location>
</feature>
<organism>
    <name type="scientific">Lactiplantibacillus plantarum (strain ATCC BAA-793 / NCIMB 8826 / WCFS1)</name>
    <name type="common">Lactobacillus plantarum</name>
    <dbReference type="NCBI Taxonomy" id="220668"/>
    <lineage>
        <taxon>Bacteria</taxon>
        <taxon>Bacillati</taxon>
        <taxon>Bacillota</taxon>
        <taxon>Bacilli</taxon>
        <taxon>Lactobacillales</taxon>
        <taxon>Lactobacillaceae</taxon>
        <taxon>Lactiplantibacillus</taxon>
    </lineage>
</organism>